<accession>A5VZV6</accession>
<organism>
    <name type="scientific">Pseudomonas putida (strain ATCC 700007 / DSM 6899 / JCM 31910 / BCRC 17059 / LMG 24140 / F1)</name>
    <dbReference type="NCBI Taxonomy" id="351746"/>
    <lineage>
        <taxon>Bacteria</taxon>
        <taxon>Pseudomonadati</taxon>
        <taxon>Pseudomonadota</taxon>
        <taxon>Gammaproteobacteria</taxon>
        <taxon>Pseudomonadales</taxon>
        <taxon>Pseudomonadaceae</taxon>
        <taxon>Pseudomonas</taxon>
    </lineage>
</organism>
<protein>
    <recommendedName>
        <fullName evidence="1">7-cyano-7-deazaguanine synthase</fullName>
        <ecNumber evidence="1">6.3.4.20</ecNumber>
    </recommendedName>
    <alternativeName>
        <fullName evidence="1">7-cyano-7-carbaguanine synthase</fullName>
    </alternativeName>
    <alternativeName>
        <fullName evidence="1">PreQ(0) synthase</fullName>
    </alternativeName>
    <alternativeName>
        <fullName evidence="1">Queuosine biosynthesis protein QueC</fullName>
    </alternativeName>
</protein>
<gene>
    <name evidence="1" type="primary">queC</name>
    <name type="ordered locus">Pput_1255</name>
</gene>
<sequence>MTEKRAVILLSGGLDSATVVAMAKAEGYSCYTMSFDYGQRHRAELNAAARVAHDLGVVEHKVIGLNLDGIGGSALTDSSIDVPEAPGEGIPVTYVPARNTVFLSLALGWAEVLEARDIFIGVNAVDYSGYPDCRPEFVEAFERMANLATKAGVEGQGFRIQAPLQNMSKAQIVQAGMARGVDYSLTVSCYQADDDGRACGKCDSCRLRADGFKAAGIEDPTRYF</sequence>
<feature type="chain" id="PRO_0000336936" description="7-cyano-7-deazaguanine synthase">
    <location>
        <begin position="1"/>
        <end position="224"/>
    </location>
</feature>
<feature type="binding site" evidence="1">
    <location>
        <begin position="10"/>
        <end position="20"/>
    </location>
    <ligand>
        <name>ATP</name>
        <dbReference type="ChEBI" id="CHEBI:30616"/>
    </ligand>
</feature>
<feature type="binding site" evidence="1">
    <location>
        <position position="189"/>
    </location>
    <ligand>
        <name>Zn(2+)</name>
        <dbReference type="ChEBI" id="CHEBI:29105"/>
    </ligand>
</feature>
<feature type="binding site" evidence="1">
    <location>
        <position position="199"/>
    </location>
    <ligand>
        <name>Zn(2+)</name>
        <dbReference type="ChEBI" id="CHEBI:29105"/>
    </ligand>
</feature>
<feature type="binding site" evidence="1">
    <location>
        <position position="202"/>
    </location>
    <ligand>
        <name>Zn(2+)</name>
        <dbReference type="ChEBI" id="CHEBI:29105"/>
    </ligand>
</feature>
<feature type="binding site" evidence="1">
    <location>
        <position position="205"/>
    </location>
    <ligand>
        <name>Zn(2+)</name>
        <dbReference type="ChEBI" id="CHEBI:29105"/>
    </ligand>
</feature>
<reference key="1">
    <citation type="submission" date="2007-05" db="EMBL/GenBank/DDBJ databases">
        <title>Complete sequence of Pseudomonas putida F1.</title>
        <authorList>
            <consortium name="US DOE Joint Genome Institute"/>
            <person name="Copeland A."/>
            <person name="Lucas S."/>
            <person name="Lapidus A."/>
            <person name="Barry K."/>
            <person name="Detter J.C."/>
            <person name="Glavina del Rio T."/>
            <person name="Hammon N."/>
            <person name="Israni S."/>
            <person name="Dalin E."/>
            <person name="Tice H."/>
            <person name="Pitluck S."/>
            <person name="Chain P."/>
            <person name="Malfatti S."/>
            <person name="Shin M."/>
            <person name="Vergez L."/>
            <person name="Schmutz J."/>
            <person name="Larimer F."/>
            <person name="Land M."/>
            <person name="Hauser L."/>
            <person name="Kyrpides N."/>
            <person name="Lykidis A."/>
            <person name="Parales R."/>
            <person name="Richardson P."/>
        </authorList>
    </citation>
    <scope>NUCLEOTIDE SEQUENCE [LARGE SCALE GENOMIC DNA]</scope>
    <source>
        <strain>ATCC 700007 / DSM 6899 / JCM 31910 / BCRC 17059 / LMG 24140 / F1</strain>
    </source>
</reference>
<name>QUEC_PSEP1</name>
<keyword id="KW-0067">ATP-binding</keyword>
<keyword id="KW-0436">Ligase</keyword>
<keyword id="KW-0479">Metal-binding</keyword>
<keyword id="KW-0547">Nucleotide-binding</keyword>
<keyword id="KW-0671">Queuosine biosynthesis</keyword>
<keyword id="KW-0862">Zinc</keyword>
<proteinExistence type="inferred from homology"/>
<evidence type="ECO:0000255" key="1">
    <source>
        <dbReference type="HAMAP-Rule" id="MF_01633"/>
    </source>
</evidence>
<comment type="function">
    <text evidence="1">Catalyzes the ATP-dependent conversion of 7-carboxy-7-deazaguanine (CDG) to 7-cyano-7-deazaguanine (preQ(0)).</text>
</comment>
<comment type="catalytic activity">
    <reaction evidence="1">
        <text>7-carboxy-7-deazaguanine + NH4(+) + ATP = 7-cyano-7-deazaguanine + ADP + phosphate + H2O + H(+)</text>
        <dbReference type="Rhea" id="RHEA:27982"/>
        <dbReference type="ChEBI" id="CHEBI:15377"/>
        <dbReference type="ChEBI" id="CHEBI:15378"/>
        <dbReference type="ChEBI" id="CHEBI:28938"/>
        <dbReference type="ChEBI" id="CHEBI:30616"/>
        <dbReference type="ChEBI" id="CHEBI:43474"/>
        <dbReference type="ChEBI" id="CHEBI:45075"/>
        <dbReference type="ChEBI" id="CHEBI:61036"/>
        <dbReference type="ChEBI" id="CHEBI:456216"/>
        <dbReference type="EC" id="6.3.4.20"/>
    </reaction>
</comment>
<comment type="cofactor">
    <cofactor evidence="1">
        <name>Zn(2+)</name>
        <dbReference type="ChEBI" id="CHEBI:29105"/>
    </cofactor>
    <text evidence="1">Binds 1 zinc ion per subunit.</text>
</comment>
<comment type="pathway">
    <text evidence="1">Purine metabolism; 7-cyano-7-deazaguanine biosynthesis.</text>
</comment>
<comment type="similarity">
    <text evidence="1">Belongs to the QueC family.</text>
</comment>
<dbReference type="EC" id="6.3.4.20" evidence="1"/>
<dbReference type="EMBL" id="CP000712">
    <property type="protein sequence ID" value="ABQ77416.1"/>
    <property type="molecule type" value="Genomic_DNA"/>
</dbReference>
<dbReference type="SMR" id="A5VZV6"/>
<dbReference type="KEGG" id="ppf:Pput_1255"/>
<dbReference type="eggNOG" id="COG0603">
    <property type="taxonomic scope" value="Bacteria"/>
</dbReference>
<dbReference type="HOGENOM" id="CLU_081854_1_1_6"/>
<dbReference type="UniPathway" id="UPA00391"/>
<dbReference type="GO" id="GO:0005524">
    <property type="term" value="F:ATP binding"/>
    <property type="evidence" value="ECO:0007669"/>
    <property type="project" value="UniProtKB-UniRule"/>
</dbReference>
<dbReference type="GO" id="GO:0016879">
    <property type="term" value="F:ligase activity, forming carbon-nitrogen bonds"/>
    <property type="evidence" value="ECO:0007669"/>
    <property type="project" value="UniProtKB-UniRule"/>
</dbReference>
<dbReference type="GO" id="GO:0008270">
    <property type="term" value="F:zinc ion binding"/>
    <property type="evidence" value="ECO:0007669"/>
    <property type="project" value="UniProtKB-UniRule"/>
</dbReference>
<dbReference type="GO" id="GO:0008616">
    <property type="term" value="P:queuosine biosynthetic process"/>
    <property type="evidence" value="ECO:0007669"/>
    <property type="project" value="UniProtKB-UniRule"/>
</dbReference>
<dbReference type="CDD" id="cd01995">
    <property type="entry name" value="QueC-like"/>
    <property type="match status" value="1"/>
</dbReference>
<dbReference type="FunFam" id="3.40.50.620:FF:000131">
    <property type="entry name" value="7-cyano-7-deazaguanine synthase"/>
    <property type="match status" value="1"/>
</dbReference>
<dbReference type="Gene3D" id="3.40.50.620">
    <property type="entry name" value="HUPs"/>
    <property type="match status" value="1"/>
</dbReference>
<dbReference type="HAMAP" id="MF_01633">
    <property type="entry name" value="QueC"/>
    <property type="match status" value="1"/>
</dbReference>
<dbReference type="InterPro" id="IPR018317">
    <property type="entry name" value="QueC"/>
</dbReference>
<dbReference type="InterPro" id="IPR014729">
    <property type="entry name" value="Rossmann-like_a/b/a_fold"/>
</dbReference>
<dbReference type="NCBIfam" id="TIGR00364">
    <property type="entry name" value="7-cyano-7-deazaguanine synthase QueC"/>
    <property type="match status" value="1"/>
</dbReference>
<dbReference type="PANTHER" id="PTHR42914">
    <property type="entry name" value="7-CYANO-7-DEAZAGUANINE SYNTHASE"/>
    <property type="match status" value="1"/>
</dbReference>
<dbReference type="PANTHER" id="PTHR42914:SF1">
    <property type="entry name" value="7-CYANO-7-DEAZAGUANINE SYNTHASE"/>
    <property type="match status" value="1"/>
</dbReference>
<dbReference type="Pfam" id="PF06508">
    <property type="entry name" value="QueC"/>
    <property type="match status" value="1"/>
</dbReference>
<dbReference type="PIRSF" id="PIRSF006293">
    <property type="entry name" value="ExsB"/>
    <property type="match status" value="1"/>
</dbReference>
<dbReference type="SUPFAM" id="SSF52402">
    <property type="entry name" value="Adenine nucleotide alpha hydrolases-like"/>
    <property type="match status" value="1"/>
</dbReference>